<keyword id="KW-1005">Bacterial flagellum biogenesis</keyword>
<keyword id="KW-0143">Chaperone</keyword>
<keyword id="KW-0963">Cytoplasm</keyword>
<keyword id="KW-1185">Reference proteome</keyword>
<keyword id="KW-0810">Translation regulation</keyword>
<gene>
    <name evidence="1" type="primary">fliW</name>
    <name type="ordered locus">DSY3025</name>
</gene>
<accession>Q24T28</accession>
<protein>
    <recommendedName>
        <fullName evidence="1">Flagellar assembly factor FliW</fullName>
    </recommendedName>
</protein>
<organism>
    <name type="scientific">Desulfitobacterium hafniense (strain Y51)</name>
    <dbReference type="NCBI Taxonomy" id="138119"/>
    <lineage>
        <taxon>Bacteria</taxon>
        <taxon>Bacillati</taxon>
        <taxon>Bacillota</taxon>
        <taxon>Clostridia</taxon>
        <taxon>Eubacteriales</taxon>
        <taxon>Desulfitobacteriaceae</taxon>
        <taxon>Desulfitobacterium</taxon>
    </lineage>
</organism>
<name>FLIW_DESHY</name>
<sequence>MKIESTRFGTLDVAPEQIIHFPHGIPGFLGEKAFVHLPHDENSPFSFLQSTAEADLSFLLIDPFSFIPEYEFVLSDEMAGELELSEENPPQVFLIGTVREKITDMTVNLLAPIVVNRNKSIGRQIILDKTEYSIRHKLFSEAKASETPEGGK</sequence>
<dbReference type="EMBL" id="AP008230">
    <property type="protein sequence ID" value="BAE84814.1"/>
    <property type="molecule type" value="Genomic_DNA"/>
</dbReference>
<dbReference type="RefSeq" id="WP_011460794.1">
    <property type="nucleotide sequence ID" value="NC_007907.1"/>
</dbReference>
<dbReference type="SMR" id="Q24T28"/>
<dbReference type="STRING" id="138119.DSY3025"/>
<dbReference type="KEGG" id="dsy:DSY3025"/>
<dbReference type="eggNOG" id="COG1699">
    <property type="taxonomic scope" value="Bacteria"/>
</dbReference>
<dbReference type="HOGENOM" id="CLU_112356_0_2_9"/>
<dbReference type="Proteomes" id="UP000001946">
    <property type="component" value="Chromosome"/>
</dbReference>
<dbReference type="GO" id="GO:0005737">
    <property type="term" value="C:cytoplasm"/>
    <property type="evidence" value="ECO:0007669"/>
    <property type="project" value="UniProtKB-SubCell"/>
</dbReference>
<dbReference type="GO" id="GO:0044780">
    <property type="term" value="P:bacterial-type flagellum assembly"/>
    <property type="evidence" value="ECO:0007669"/>
    <property type="project" value="UniProtKB-UniRule"/>
</dbReference>
<dbReference type="GO" id="GO:0006417">
    <property type="term" value="P:regulation of translation"/>
    <property type="evidence" value="ECO:0007669"/>
    <property type="project" value="UniProtKB-KW"/>
</dbReference>
<dbReference type="Gene3D" id="2.30.290.10">
    <property type="entry name" value="BH3618-like"/>
    <property type="match status" value="1"/>
</dbReference>
<dbReference type="HAMAP" id="MF_01185">
    <property type="entry name" value="FliW"/>
    <property type="match status" value="1"/>
</dbReference>
<dbReference type="InterPro" id="IPR003775">
    <property type="entry name" value="Flagellar_assembly_factor_FliW"/>
</dbReference>
<dbReference type="InterPro" id="IPR024046">
    <property type="entry name" value="Flagellar_assmbl_FliW_dom_sf"/>
</dbReference>
<dbReference type="NCBIfam" id="NF009793">
    <property type="entry name" value="PRK13285.1-1"/>
    <property type="match status" value="1"/>
</dbReference>
<dbReference type="PANTHER" id="PTHR39190">
    <property type="entry name" value="FLAGELLAR ASSEMBLY FACTOR FLIW"/>
    <property type="match status" value="1"/>
</dbReference>
<dbReference type="PANTHER" id="PTHR39190:SF1">
    <property type="entry name" value="FLAGELLAR ASSEMBLY FACTOR FLIW"/>
    <property type="match status" value="1"/>
</dbReference>
<dbReference type="Pfam" id="PF02623">
    <property type="entry name" value="FliW"/>
    <property type="match status" value="1"/>
</dbReference>
<dbReference type="SUPFAM" id="SSF141457">
    <property type="entry name" value="BH3618-like"/>
    <property type="match status" value="1"/>
</dbReference>
<feature type="chain" id="PRO_0000272984" description="Flagellar assembly factor FliW">
    <location>
        <begin position="1"/>
        <end position="152"/>
    </location>
</feature>
<proteinExistence type="inferred from homology"/>
<evidence type="ECO:0000255" key="1">
    <source>
        <dbReference type="HAMAP-Rule" id="MF_01185"/>
    </source>
</evidence>
<reference key="1">
    <citation type="journal article" date="2006" name="J. Bacteriol.">
        <title>Complete genome sequence of the dehalorespiring bacterium Desulfitobacterium hafniense Y51 and comparison with Dehalococcoides ethenogenes 195.</title>
        <authorList>
            <person name="Nonaka H."/>
            <person name="Keresztes G."/>
            <person name="Shinoda Y."/>
            <person name="Ikenaga Y."/>
            <person name="Abe M."/>
            <person name="Naito K."/>
            <person name="Inatomi K."/>
            <person name="Furukawa K."/>
            <person name="Inui M."/>
            <person name="Yukawa H."/>
        </authorList>
    </citation>
    <scope>NUCLEOTIDE SEQUENCE [LARGE SCALE GENOMIC DNA]</scope>
    <source>
        <strain>Y51</strain>
    </source>
</reference>
<comment type="function">
    <text evidence="1">Acts as an anti-CsrA protein, binds CsrA and prevents it from repressing translation of its target genes, one of which is flagellin. Binds to flagellin and participates in the assembly of the flagellum.</text>
</comment>
<comment type="subunit">
    <text evidence="1">Interacts with translational regulator CsrA and flagellin(s).</text>
</comment>
<comment type="subcellular location">
    <subcellularLocation>
        <location evidence="1">Cytoplasm</location>
    </subcellularLocation>
</comment>
<comment type="similarity">
    <text evidence="1">Belongs to the FliW family.</text>
</comment>